<evidence type="ECO:0000255" key="1">
    <source>
        <dbReference type="HAMAP-Rule" id="MF_00181"/>
    </source>
</evidence>
<proteinExistence type="inferred from homology"/>
<sequence length="500" mass="52230">MPDAVKVGFVPFSAAARGTLVVFCDDTLKFGSVTGKALGAAASTVKRAVAASQFKGKSGSALDLLAPEGLKVGRLIVIGTGKAAALKDNDIVKLGGAVAGKLSTGDSAVTVIAELPGGAMRPEQAAAVASGIRLRAYKFDRYKTKKKDDDADAANANVSIAVADVAAAKKAFAPDSHVVDGVILARELVNEPPNVLYPEEFAKRAAQLRKLGVQVEILDVKAMTRLKMGALLGVSQGSAHPGRTVIMRWNGGKRGAQPVAFVGKGVCFDTGGISIKPSASMEDMKGDMGGAACVVGLMHALAARKAKINVIGAIGLVENMPDGNAQRPGDIVTSMSGQTIEIINTDAEGRLVLADVLWYVAQKHKPKFMVDLATLTGAIMVALGTDHAGLFSNNDELAERLTAAGLSTGERVWRMPLGPEYDKQIDSQFADMKNTGSRNGGSITAAQFLQRFVDNTPWAHLDIAGTAMGAPKSDINHSWGSGYGVRLLNALVAEHYEAKK</sequence>
<organism>
    <name type="scientific">Rhodopseudomonas palustris (strain BisB5)</name>
    <dbReference type="NCBI Taxonomy" id="316057"/>
    <lineage>
        <taxon>Bacteria</taxon>
        <taxon>Pseudomonadati</taxon>
        <taxon>Pseudomonadota</taxon>
        <taxon>Alphaproteobacteria</taxon>
        <taxon>Hyphomicrobiales</taxon>
        <taxon>Nitrobacteraceae</taxon>
        <taxon>Rhodopseudomonas</taxon>
    </lineage>
</organism>
<name>AMPA_RHOPS</name>
<gene>
    <name evidence="1" type="primary">pepA</name>
    <name type="ordered locus">RPD_2965</name>
</gene>
<keyword id="KW-0031">Aminopeptidase</keyword>
<keyword id="KW-0963">Cytoplasm</keyword>
<keyword id="KW-0378">Hydrolase</keyword>
<keyword id="KW-0464">Manganese</keyword>
<keyword id="KW-0479">Metal-binding</keyword>
<keyword id="KW-0645">Protease</keyword>
<comment type="function">
    <text evidence="1">Presumably involved in the processing and regular turnover of intracellular proteins. Catalyzes the removal of unsubstituted N-terminal amino acids from various peptides.</text>
</comment>
<comment type="catalytic activity">
    <reaction evidence="1">
        <text>Release of an N-terminal amino acid, Xaa-|-Yaa-, in which Xaa is preferably Leu, but may be other amino acids including Pro although not Arg or Lys, and Yaa may be Pro. Amino acid amides and methyl esters are also readily hydrolyzed, but rates on arylamides are exceedingly low.</text>
        <dbReference type="EC" id="3.4.11.1"/>
    </reaction>
</comment>
<comment type="catalytic activity">
    <reaction evidence="1">
        <text>Release of an N-terminal amino acid, preferentially leucine, but not glutamic or aspartic acids.</text>
        <dbReference type="EC" id="3.4.11.10"/>
    </reaction>
</comment>
<comment type="cofactor">
    <cofactor evidence="1">
        <name>Mn(2+)</name>
        <dbReference type="ChEBI" id="CHEBI:29035"/>
    </cofactor>
    <text evidence="1">Binds 2 manganese ions per subunit.</text>
</comment>
<comment type="subcellular location">
    <subcellularLocation>
        <location evidence="1">Cytoplasm</location>
    </subcellularLocation>
</comment>
<comment type="similarity">
    <text evidence="1">Belongs to the peptidase M17 family.</text>
</comment>
<reference key="1">
    <citation type="submission" date="2006-03" db="EMBL/GenBank/DDBJ databases">
        <title>Complete sequence of Rhodopseudomonas palustris BisB5.</title>
        <authorList>
            <consortium name="US DOE Joint Genome Institute"/>
            <person name="Copeland A."/>
            <person name="Lucas S."/>
            <person name="Lapidus A."/>
            <person name="Barry K."/>
            <person name="Detter J.C."/>
            <person name="Glavina del Rio T."/>
            <person name="Hammon N."/>
            <person name="Israni S."/>
            <person name="Dalin E."/>
            <person name="Tice H."/>
            <person name="Pitluck S."/>
            <person name="Chain P."/>
            <person name="Malfatti S."/>
            <person name="Shin M."/>
            <person name="Vergez L."/>
            <person name="Schmutz J."/>
            <person name="Larimer F."/>
            <person name="Land M."/>
            <person name="Hauser L."/>
            <person name="Pelletier D.A."/>
            <person name="Kyrpides N."/>
            <person name="Lykidis A."/>
            <person name="Oda Y."/>
            <person name="Harwood C.S."/>
            <person name="Richardson P."/>
        </authorList>
    </citation>
    <scope>NUCLEOTIDE SEQUENCE [LARGE SCALE GENOMIC DNA]</scope>
    <source>
        <strain>BisB5</strain>
    </source>
</reference>
<accession>Q135P8</accession>
<protein>
    <recommendedName>
        <fullName evidence="1">Probable cytosol aminopeptidase</fullName>
        <ecNumber evidence="1">3.4.11.1</ecNumber>
    </recommendedName>
    <alternativeName>
        <fullName evidence="1">Leucine aminopeptidase</fullName>
        <shortName evidence="1">LAP</shortName>
        <ecNumber evidence="1">3.4.11.10</ecNumber>
    </alternativeName>
    <alternativeName>
        <fullName evidence="1">Leucyl aminopeptidase</fullName>
    </alternativeName>
</protein>
<feature type="chain" id="PRO_1000019970" description="Probable cytosol aminopeptidase">
    <location>
        <begin position="1"/>
        <end position="500"/>
    </location>
</feature>
<feature type="active site" evidence="1">
    <location>
        <position position="276"/>
    </location>
</feature>
<feature type="active site" evidence="1">
    <location>
        <position position="350"/>
    </location>
</feature>
<feature type="binding site" evidence="1">
    <location>
        <position position="264"/>
    </location>
    <ligand>
        <name>Mn(2+)</name>
        <dbReference type="ChEBI" id="CHEBI:29035"/>
        <label>2</label>
    </ligand>
</feature>
<feature type="binding site" evidence="1">
    <location>
        <position position="269"/>
    </location>
    <ligand>
        <name>Mn(2+)</name>
        <dbReference type="ChEBI" id="CHEBI:29035"/>
        <label>1</label>
    </ligand>
</feature>
<feature type="binding site" evidence="1">
    <location>
        <position position="269"/>
    </location>
    <ligand>
        <name>Mn(2+)</name>
        <dbReference type="ChEBI" id="CHEBI:29035"/>
        <label>2</label>
    </ligand>
</feature>
<feature type="binding site" evidence="1">
    <location>
        <position position="287"/>
    </location>
    <ligand>
        <name>Mn(2+)</name>
        <dbReference type="ChEBI" id="CHEBI:29035"/>
        <label>2</label>
    </ligand>
</feature>
<feature type="binding site" evidence="1">
    <location>
        <position position="346"/>
    </location>
    <ligand>
        <name>Mn(2+)</name>
        <dbReference type="ChEBI" id="CHEBI:29035"/>
        <label>1</label>
    </ligand>
</feature>
<feature type="binding site" evidence="1">
    <location>
        <position position="348"/>
    </location>
    <ligand>
        <name>Mn(2+)</name>
        <dbReference type="ChEBI" id="CHEBI:29035"/>
        <label>1</label>
    </ligand>
</feature>
<feature type="binding site" evidence="1">
    <location>
        <position position="348"/>
    </location>
    <ligand>
        <name>Mn(2+)</name>
        <dbReference type="ChEBI" id="CHEBI:29035"/>
        <label>2</label>
    </ligand>
</feature>
<dbReference type="EC" id="3.4.11.1" evidence="1"/>
<dbReference type="EC" id="3.4.11.10" evidence="1"/>
<dbReference type="EMBL" id="CP000283">
    <property type="protein sequence ID" value="ABE40191.1"/>
    <property type="molecule type" value="Genomic_DNA"/>
</dbReference>
<dbReference type="SMR" id="Q135P8"/>
<dbReference type="STRING" id="316057.RPD_2965"/>
<dbReference type="KEGG" id="rpd:RPD_2965"/>
<dbReference type="eggNOG" id="COG0260">
    <property type="taxonomic scope" value="Bacteria"/>
</dbReference>
<dbReference type="HOGENOM" id="CLU_013734_6_0_5"/>
<dbReference type="BioCyc" id="RPAL316057:RPD_RS14895-MONOMER"/>
<dbReference type="Proteomes" id="UP000001818">
    <property type="component" value="Chromosome"/>
</dbReference>
<dbReference type="GO" id="GO:0005737">
    <property type="term" value="C:cytoplasm"/>
    <property type="evidence" value="ECO:0007669"/>
    <property type="project" value="UniProtKB-SubCell"/>
</dbReference>
<dbReference type="GO" id="GO:0030145">
    <property type="term" value="F:manganese ion binding"/>
    <property type="evidence" value="ECO:0007669"/>
    <property type="project" value="UniProtKB-UniRule"/>
</dbReference>
<dbReference type="GO" id="GO:0070006">
    <property type="term" value="F:metalloaminopeptidase activity"/>
    <property type="evidence" value="ECO:0007669"/>
    <property type="project" value="InterPro"/>
</dbReference>
<dbReference type="GO" id="GO:0006508">
    <property type="term" value="P:proteolysis"/>
    <property type="evidence" value="ECO:0007669"/>
    <property type="project" value="UniProtKB-KW"/>
</dbReference>
<dbReference type="CDD" id="cd00433">
    <property type="entry name" value="Peptidase_M17"/>
    <property type="match status" value="1"/>
</dbReference>
<dbReference type="Gene3D" id="3.40.220.10">
    <property type="entry name" value="Leucine Aminopeptidase, subunit E, domain 1"/>
    <property type="match status" value="1"/>
</dbReference>
<dbReference type="Gene3D" id="3.40.630.10">
    <property type="entry name" value="Zn peptidases"/>
    <property type="match status" value="1"/>
</dbReference>
<dbReference type="HAMAP" id="MF_00181">
    <property type="entry name" value="Cytosol_peptidase_M17"/>
    <property type="match status" value="1"/>
</dbReference>
<dbReference type="InterPro" id="IPR011356">
    <property type="entry name" value="Leucine_aapep/pepB"/>
</dbReference>
<dbReference type="InterPro" id="IPR043472">
    <property type="entry name" value="Macro_dom-like"/>
</dbReference>
<dbReference type="InterPro" id="IPR000819">
    <property type="entry name" value="Peptidase_M17_C"/>
</dbReference>
<dbReference type="InterPro" id="IPR023042">
    <property type="entry name" value="Peptidase_M17_leu_NH2_pept"/>
</dbReference>
<dbReference type="InterPro" id="IPR008283">
    <property type="entry name" value="Peptidase_M17_N"/>
</dbReference>
<dbReference type="NCBIfam" id="NF002073">
    <property type="entry name" value="PRK00913.1-2"/>
    <property type="match status" value="1"/>
</dbReference>
<dbReference type="NCBIfam" id="NF002074">
    <property type="entry name" value="PRK00913.1-4"/>
    <property type="match status" value="1"/>
</dbReference>
<dbReference type="NCBIfam" id="NF002075">
    <property type="entry name" value="PRK00913.2-2"/>
    <property type="match status" value="1"/>
</dbReference>
<dbReference type="NCBIfam" id="NF002077">
    <property type="entry name" value="PRK00913.2-4"/>
    <property type="match status" value="1"/>
</dbReference>
<dbReference type="NCBIfam" id="NF002083">
    <property type="entry name" value="PRK00913.3-5"/>
    <property type="match status" value="1"/>
</dbReference>
<dbReference type="PANTHER" id="PTHR11963:SF23">
    <property type="entry name" value="CYTOSOL AMINOPEPTIDASE"/>
    <property type="match status" value="1"/>
</dbReference>
<dbReference type="PANTHER" id="PTHR11963">
    <property type="entry name" value="LEUCINE AMINOPEPTIDASE-RELATED"/>
    <property type="match status" value="1"/>
</dbReference>
<dbReference type="Pfam" id="PF00883">
    <property type="entry name" value="Peptidase_M17"/>
    <property type="match status" value="1"/>
</dbReference>
<dbReference type="Pfam" id="PF02789">
    <property type="entry name" value="Peptidase_M17_N"/>
    <property type="match status" value="1"/>
</dbReference>
<dbReference type="PRINTS" id="PR00481">
    <property type="entry name" value="LAMNOPPTDASE"/>
</dbReference>
<dbReference type="SUPFAM" id="SSF52949">
    <property type="entry name" value="Macro domain-like"/>
    <property type="match status" value="1"/>
</dbReference>
<dbReference type="SUPFAM" id="SSF53187">
    <property type="entry name" value="Zn-dependent exopeptidases"/>
    <property type="match status" value="1"/>
</dbReference>
<dbReference type="PROSITE" id="PS00631">
    <property type="entry name" value="CYTOSOL_AP"/>
    <property type="match status" value="1"/>
</dbReference>